<evidence type="ECO:0000255" key="1">
    <source>
        <dbReference type="HAMAP-Rule" id="MF_01522"/>
    </source>
</evidence>
<evidence type="ECO:0000256" key="2">
    <source>
        <dbReference type="SAM" id="MobiDB-lite"/>
    </source>
</evidence>
<dbReference type="EMBL" id="AE008692">
    <property type="protein sequence ID" value="AAV89833.1"/>
    <property type="molecule type" value="Genomic_DNA"/>
</dbReference>
<dbReference type="RefSeq" id="WP_011241029.1">
    <property type="nucleotide sequence ID" value="NZ_CP035711.1"/>
</dbReference>
<dbReference type="STRING" id="264203.ZMO1209"/>
<dbReference type="KEGG" id="zmo:ZMO1209"/>
<dbReference type="eggNOG" id="COG3158">
    <property type="taxonomic scope" value="Bacteria"/>
</dbReference>
<dbReference type="HOGENOM" id="CLU_008142_4_2_5"/>
<dbReference type="Proteomes" id="UP000001173">
    <property type="component" value="Chromosome"/>
</dbReference>
<dbReference type="GO" id="GO:0005886">
    <property type="term" value="C:plasma membrane"/>
    <property type="evidence" value="ECO:0007669"/>
    <property type="project" value="UniProtKB-SubCell"/>
</dbReference>
<dbReference type="GO" id="GO:0015079">
    <property type="term" value="F:potassium ion transmembrane transporter activity"/>
    <property type="evidence" value="ECO:0007669"/>
    <property type="project" value="UniProtKB-UniRule"/>
</dbReference>
<dbReference type="GO" id="GO:0015293">
    <property type="term" value="F:symporter activity"/>
    <property type="evidence" value="ECO:0007669"/>
    <property type="project" value="UniProtKB-UniRule"/>
</dbReference>
<dbReference type="HAMAP" id="MF_01522">
    <property type="entry name" value="Kup"/>
    <property type="match status" value="1"/>
</dbReference>
<dbReference type="InterPro" id="IPR003855">
    <property type="entry name" value="K+_transporter"/>
</dbReference>
<dbReference type="InterPro" id="IPR053952">
    <property type="entry name" value="K_trans_C"/>
</dbReference>
<dbReference type="InterPro" id="IPR053951">
    <property type="entry name" value="K_trans_N"/>
</dbReference>
<dbReference type="InterPro" id="IPR023051">
    <property type="entry name" value="Kup"/>
</dbReference>
<dbReference type="PANTHER" id="PTHR30540:SF79">
    <property type="entry name" value="LOW AFFINITY POTASSIUM TRANSPORT SYSTEM PROTEIN KUP"/>
    <property type="match status" value="1"/>
</dbReference>
<dbReference type="PANTHER" id="PTHR30540">
    <property type="entry name" value="OSMOTIC STRESS POTASSIUM TRANSPORTER"/>
    <property type="match status" value="1"/>
</dbReference>
<dbReference type="Pfam" id="PF02705">
    <property type="entry name" value="K_trans"/>
    <property type="match status" value="1"/>
</dbReference>
<dbReference type="Pfam" id="PF22776">
    <property type="entry name" value="K_trans_C"/>
    <property type="match status" value="1"/>
</dbReference>
<organism>
    <name type="scientific">Zymomonas mobilis subsp. mobilis (strain ATCC 31821 / ZM4 / CP4)</name>
    <dbReference type="NCBI Taxonomy" id="264203"/>
    <lineage>
        <taxon>Bacteria</taxon>
        <taxon>Pseudomonadati</taxon>
        <taxon>Pseudomonadota</taxon>
        <taxon>Alphaproteobacteria</taxon>
        <taxon>Sphingomonadales</taxon>
        <taxon>Zymomonadaceae</taxon>
        <taxon>Zymomonas</taxon>
    </lineage>
</organism>
<comment type="function">
    <text evidence="1">Transport of potassium into the cell. Likely operates as a K(+):H(+) symporter.</text>
</comment>
<comment type="catalytic activity">
    <reaction evidence="1">
        <text>K(+)(in) + H(+)(in) = K(+)(out) + H(+)(out)</text>
        <dbReference type="Rhea" id="RHEA:28490"/>
        <dbReference type="ChEBI" id="CHEBI:15378"/>
        <dbReference type="ChEBI" id="CHEBI:29103"/>
    </reaction>
    <physiologicalReaction direction="right-to-left" evidence="1">
        <dbReference type="Rhea" id="RHEA:28492"/>
    </physiologicalReaction>
</comment>
<comment type="subcellular location">
    <subcellularLocation>
        <location evidence="1">Cell inner membrane</location>
        <topology evidence="1">Multi-pass membrane protein</topology>
    </subcellularLocation>
</comment>
<comment type="similarity">
    <text evidence="1">Belongs to the HAK/KUP transporter (TC 2.A.72) family.</text>
</comment>
<sequence>MSNDTSPGTSSVDSKSSDPSYGVPGHSHSDKDLLKLSLGAIGIVFGDIGTSPLYALKECFKGHHQLPVDDFHIYGLVSLIFWTMGLVVTVKYVMFIMKADNKGEGGSMSLLSLIIRGANPKLSRWLIVLGVFATALFYGDSMITPAMSVLSAVEGLTVIEPSFDSWVPPVSVVILIGLFCIQARGTESVGRLFGPIMLVYFATLAILGAFNIITRSPAILLALNPYYAIHFFASDPLQGFWALGSVVLSVTGAEALYADMGHFGRQPISLGWYWVVFPALTLNYLGQCALLSADHEAIANPFYFLAPDFLRVPLIILATFAAVIASQAVITGAFSVTQQAIQLGYIPRLRVNHTSASTVGQIYIPSVNWVLMFMVMVLIAMFKNSTNLANAYGIAVTGTMFITSCMMGVLVHRVWHWKAWQSIPLVSFFLLIDGAFFLSNVTKIPEGGWFPLLVGFVVFTMLMTWSRGRHLMAERMRQVAMPIQLFIRSAAASAVRIPGTAIFLTPEDDGVPHALLHNLKHNKILHERVILLTVKIEDVPYVDPHYRASMSSLEDGFYRLIVRYGFMEEPDVPLALNKIEQSGPMLRMDDTSFFISRQTLIPSTHTSMAIWREKLFAWMLRNSESATEFFKLPSNRVVELGSQIELVGSNGK</sequence>
<keyword id="KW-0997">Cell inner membrane</keyword>
<keyword id="KW-1003">Cell membrane</keyword>
<keyword id="KW-0406">Ion transport</keyword>
<keyword id="KW-0472">Membrane</keyword>
<keyword id="KW-0630">Potassium</keyword>
<keyword id="KW-0633">Potassium transport</keyword>
<keyword id="KW-1185">Reference proteome</keyword>
<keyword id="KW-0769">Symport</keyword>
<keyword id="KW-0812">Transmembrane</keyword>
<keyword id="KW-1133">Transmembrane helix</keyword>
<keyword id="KW-0813">Transport</keyword>
<name>KUP_ZYMMO</name>
<accession>Q5NN77</accession>
<protein>
    <recommendedName>
        <fullName evidence="1">Probable potassium transport system protein Kup</fullName>
    </recommendedName>
</protein>
<reference key="1">
    <citation type="journal article" date="2005" name="Nat. Biotechnol.">
        <title>The genome sequence of the ethanologenic bacterium Zymomonas mobilis ZM4.</title>
        <authorList>
            <person name="Seo J.-S."/>
            <person name="Chong H."/>
            <person name="Park H.S."/>
            <person name="Yoon K.-O."/>
            <person name="Jung C."/>
            <person name="Kim J.J."/>
            <person name="Hong J.H."/>
            <person name="Kim H."/>
            <person name="Kim J.-H."/>
            <person name="Kil J.-I."/>
            <person name="Park C.J."/>
            <person name="Oh H.-M."/>
            <person name="Lee J.-S."/>
            <person name="Jin S.-J."/>
            <person name="Um H.-W."/>
            <person name="Lee H.-J."/>
            <person name="Oh S.-J."/>
            <person name="Kim J.Y."/>
            <person name="Kang H.L."/>
            <person name="Lee S.Y."/>
            <person name="Lee K.J."/>
            <person name="Kang H.S."/>
        </authorList>
    </citation>
    <scope>NUCLEOTIDE SEQUENCE [LARGE SCALE GENOMIC DNA]</scope>
    <source>
        <strain>ATCC 31821 / ZM4 / CP4</strain>
    </source>
</reference>
<proteinExistence type="inferred from homology"/>
<feature type="chain" id="PRO_0000209075" description="Probable potassium transport system protein Kup">
    <location>
        <begin position="1"/>
        <end position="652"/>
    </location>
</feature>
<feature type="transmembrane region" description="Helical" evidence="1">
    <location>
        <begin position="36"/>
        <end position="56"/>
    </location>
</feature>
<feature type="transmembrane region" description="Helical" evidence="1">
    <location>
        <begin position="76"/>
        <end position="96"/>
    </location>
</feature>
<feature type="transmembrane region" description="Helical" evidence="1">
    <location>
        <begin position="125"/>
        <end position="145"/>
    </location>
</feature>
<feature type="transmembrane region" description="Helical" evidence="1">
    <location>
        <begin position="161"/>
        <end position="181"/>
    </location>
</feature>
<feature type="transmembrane region" description="Helical" evidence="1">
    <location>
        <begin position="193"/>
        <end position="213"/>
    </location>
</feature>
<feature type="transmembrane region" description="Helical" evidence="1">
    <location>
        <begin position="228"/>
        <end position="248"/>
    </location>
</feature>
<feature type="transmembrane region" description="Helical" evidence="1">
    <location>
        <begin position="270"/>
        <end position="290"/>
    </location>
</feature>
<feature type="transmembrane region" description="Helical" evidence="1">
    <location>
        <begin position="314"/>
        <end position="334"/>
    </location>
</feature>
<feature type="transmembrane region" description="Helical" evidence="1">
    <location>
        <begin position="362"/>
        <end position="382"/>
    </location>
</feature>
<feature type="transmembrane region" description="Helical" evidence="1">
    <location>
        <begin position="391"/>
        <end position="411"/>
    </location>
</feature>
<feature type="transmembrane region" description="Helical" evidence="1">
    <location>
        <begin position="419"/>
        <end position="439"/>
    </location>
</feature>
<feature type="transmembrane region" description="Helical" evidence="1">
    <location>
        <begin position="444"/>
        <end position="464"/>
    </location>
</feature>
<feature type="region of interest" description="Disordered" evidence="2">
    <location>
        <begin position="1"/>
        <end position="26"/>
    </location>
</feature>
<feature type="compositionally biased region" description="Low complexity" evidence="2">
    <location>
        <begin position="1"/>
        <end position="20"/>
    </location>
</feature>
<gene>
    <name evidence="1" type="primary">kup</name>
    <name type="ordered locus">ZMO1209</name>
</gene>